<gene>
    <name evidence="1" type="primary">lolB</name>
    <name type="ordered locus">Sbal223_3548</name>
</gene>
<dbReference type="EMBL" id="CP001252">
    <property type="protein sequence ID" value="ACK48030.1"/>
    <property type="molecule type" value="Genomic_DNA"/>
</dbReference>
<dbReference type="RefSeq" id="WP_012588517.1">
    <property type="nucleotide sequence ID" value="NC_011663.1"/>
</dbReference>
<dbReference type="SMR" id="B8E817"/>
<dbReference type="KEGG" id="sbp:Sbal223_3548"/>
<dbReference type="HOGENOM" id="CLU_092816_1_0_6"/>
<dbReference type="Proteomes" id="UP000002507">
    <property type="component" value="Chromosome"/>
</dbReference>
<dbReference type="GO" id="GO:0009279">
    <property type="term" value="C:cell outer membrane"/>
    <property type="evidence" value="ECO:0007669"/>
    <property type="project" value="UniProtKB-SubCell"/>
</dbReference>
<dbReference type="GO" id="GO:0044874">
    <property type="term" value="P:lipoprotein localization to outer membrane"/>
    <property type="evidence" value="ECO:0007669"/>
    <property type="project" value="UniProtKB-UniRule"/>
</dbReference>
<dbReference type="GO" id="GO:0015031">
    <property type="term" value="P:protein transport"/>
    <property type="evidence" value="ECO:0007669"/>
    <property type="project" value="UniProtKB-KW"/>
</dbReference>
<dbReference type="CDD" id="cd16326">
    <property type="entry name" value="LolB"/>
    <property type="match status" value="1"/>
</dbReference>
<dbReference type="Gene3D" id="2.50.20.10">
    <property type="entry name" value="Lipoprotein localisation LolA/LolB/LppX"/>
    <property type="match status" value="1"/>
</dbReference>
<dbReference type="HAMAP" id="MF_00233">
    <property type="entry name" value="LolB"/>
    <property type="match status" value="1"/>
</dbReference>
<dbReference type="InterPro" id="IPR029046">
    <property type="entry name" value="LolA/LolB/LppX"/>
</dbReference>
<dbReference type="InterPro" id="IPR004565">
    <property type="entry name" value="OM_lipoprot_LolB"/>
</dbReference>
<dbReference type="NCBIfam" id="TIGR00548">
    <property type="entry name" value="lolB"/>
    <property type="match status" value="1"/>
</dbReference>
<dbReference type="Pfam" id="PF03550">
    <property type="entry name" value="LolB"/>
    <property type="match status" value="1"/>
</dbReference>
<dbReference type="SUPFAM" id="SSF89392">
    <property type="entry name" value="Prokaryotic lipoproteins and lipoprotein localization factors"/>
    <property type="match status" value="1"/>
</dbReference>
<dbReference type="PROSITE" id="PS51257">
    <property type="entry name" value="PROKAR_LIPOPROTEIN"/>
    <property type="match status" value="1"/>
</dbReference>
<reference key="1">
    <citation type="submission" date="2008-12" db="EMBL/GenBank/DDBJ databases">
        <title>Complete sequence of chromosome of Shewanella baltica OS223.</title>
        <authorList>
            <consortium name="US DOE Joint Genome Institute"/>
            <person name="Lucas S."/>
            <person name="Copeland A."/>
            <person name="Lapidus A."/>
            <person name="Glavina del Rio T."/>
            <person name="Dalin E."/>
            <person name="Tice H."/>
            <person name="Bruce D."/>
            <person name="Goodwin L."/>
            <person name="Pitluck S."/>
            <person name="Chertkov O."/>
            <person name="Meincke L."/>
            <person name="Brettin T."/>
            <person name="Detter J.C."/>
            <person name="Han C."/>
            <person name="Kuske C.R."/>
            <person name="Larimer F."/>
            <person name="Land M."/>
            <person name="Hauser L."/>
            <person name="Kyrpides N."/>
            <person name="Ovchinnikova G."/>
            <person name="Brettar I."/>
            <person name="Rodrigues J."/>
            <person name="Konstantinidis K."/>
            <person name="Tiedje J."/>
        </authorList>
    </citation>
    <scope>NUCLEOTIDE SEQUENCE [LARGE SCALE GENOMIC DNA]</scope>
    <source>
        <strain>OS223</strain>
    </source>
</reference>
<name>LOLB_SHEB2</name>
<feature type="signal peptide" evidence="1">
    <location>
        <begin position="1"/>
        <end position="25"/>
    </location>
</feature>
<feature type="chain" id="PRO_1000190863" description="Outer-membrane lipoprotein LolB">
    <location>
        <begin position="26"/>
        <end position="214"/>
    </location>
</feature>
<feature type="region of interest" description="Disordered" evidence="2">
    <location>
        <begin position="143"/>
        <end position="163"/>
    </location>
</feature>
<feature type="compositionally biased region" description="Polar residues" evidence="2">
    <location>
        <begin position="143"/>
        <end position="160"/>
    </location>
</feature>
<feature type="lipid moiety-binding region" description="N-palmitoyl cysteine" evidence="1">
    <location>
        <position position="26"/>
    </location>
</feature>
<feature type="lipid moiety-binding region" description="S-diacylglycerol cysteine" evidence="1">
    <location>
        <position position="26"/>
    </location>
</feature>
<keyword id="KW-0998">Cell outer membrane</keyword>
<keyword id="KW-0143">Chaperone</keyword>
<keyword id="KW-0449">Lipoprotein</keyword>
<keyword id="KW-0472">Membrane</keyword>
<keyword id="KW-0564">Palmitate</keyword>
<keyword id="KW-0653">Protein transport</keyword>
<keyword id="KW-0732">Signal</keyword>
<keyword id="KW-0813">Transport</keyword>
<evidence type="ECO:0000255" key="1">
    <source>
        <dbReference type="HAMAP-Rule" id="MF_00233"/>
    </source>
</evidence>
<evidence type="ECO:0000256" key="2">
    <source>
        <dbReference type="SAM" id="MobiDB-lite"/>
    </source>
</evidence>
<comment type="function">
    <text evidence="1">Plays a critical role in the incorporation of lipoproteins in the outer membrane after they are released by the LolA protein.</text>
</comment>
<comment type="subunit">
    <text evidence="1">Monomer.</text>
</comment>
<comment type="subcellular location">
    <subcellularLocation>
        <location evidence="1">Cell outer membrane</location>
        <topology evidence="1">Lipid-anchor</topology>
    </subcellularLocation>
</comment>
<comment type="similarity">
    <text evidence="1">Belongs to the LolB family.</text>
</comment>
<protein>
    <recommendedName>
        <fullName evidence="1">Outer-membrane lipoprotein LolB</fullName>
    </recommendedName>
</protein>
<sequence>MNNLKRLTKTIFSCFTLSALLLLAGCETLPPMTDLSPITVIDARQATAWELQGKLAIKTPDDKLSANIYWRHSEDRDELTLTTMLGTTVLTLNSTPNSAHLHIDGKDFRDDNAQRLLERVSGWSIPLADLPLWITGQVGPNDQVIESDSQGKPKQLTNTQTPPPWQVAFLSWQSQSGASVPHQLKLERGDLQLKLQLNQWQALGKPAILVGEQP</sequence>
<proteinExistence type="inferred from homology"/>
<accession>B8E817</accession>
<organism>
    <name type="scientific">Shewanella baltica (strain OS223)</name>
    <dbReference type="NCBI Taxonomy" id="407976"/>
    <lineage>
        <taxon>Bacteria</taxon>
        <taxon>Pseudomonadati</taxon>
        <taxon>Pseudomonadota</taxon>
        <taxon>Gammaproteobacteria</taxon>
        <taxon>Alteromonadales</taxon>
        <taxon>Shewanellaceae</taxon>
        <taxon>Shewanella</taxon>
    </lineage>
</organism>